<reference key="1">
    <citation type="journal article" date="1992" name="Bot. Mag. Tokyo">
        <title>Phylogeny of gymnosperms inferred from rbcL gene sequences.</title>
        <authorList>
            <person name="Hasebe M."/>
            <person name="Kofuji R."/>
            <person name="Ito M."/>
            <person name="Kato M."/>
            <person name="Iwatsuki K."/>
            <person name="Ueda K."/>
        </authorList>
    </citation>
    <scope>NUCLEOTIDE SEQUENCE [GENOMIC DNA]</scope>
</reference>
<comment type="function">
    <text evidence="1">RuBisCO catalyzes two reactions: the carboxylation of D-ribulose 1,5-bisphosphate, the primary event in carbon dioxide fixation, as well as the oxidative fragmentation of the pentose substrate in the photorespiration process. Both reactions occur simultaneously and in competition at the same active site.</text>
</comment>
<comment type="catalytic activity">
    <reaction evidence="1">
        <text>2 (2R)-3-phosphoglycerate + 2 H(+) = D-ribulose 1,5-bisphosphate + CO2 + H2O</text>
        <dbReference type="Rhea" id="RHEA:23124"/>
        <dbReference type="ChEBI" id="CHEBI:15377"/>
        <dbReference type="ChEBI" id="CHEBI:15378"/>
        <dbReference type="ChEBI" id="CHEBI:16526"/>
        <dbReference type="ChEBI" id="CHEBI:57870"/>
        <dbReference type="ChEBI" id="CHEBI:58272"/>
        <dbReference type="EC" id="4.1.1.39"/>
    </reaction>
</comment>
<comment type="catalytic activity">
    <reaction evidence="1">
        <text>D-ribulose 1,5-bisphosphate + O2 = 2-phosphoglycolate + (2R)-3-phosphoglycerate + 2 H(+)</text>
        <dbReference type="Rhea" id="RHEA:36631"/>
        <dbReference type="ChEBI" id="CHEBI:15378"/>
        <dbReference type="ChEBI" id="CHEBI:15379"/>
        <dbReference type="ChEBI" id="CHEBI:57870"/>
        <dbReference type="ChEBI" id="CHEBI:58033"/>
        <dbReference type="ChEBI" id="CHEBI:58272"/>
    </reaction>
</comment>
<comment type="cofactor">
    <cofactor evidence="1">
        <name>Mg(2+)</name>
        <dbReference type="ChEBI" id="CHEBI:18420"/>
    </cofactor>
    <text evidence="1">Binds 1 Mg(2+) ion per subunit.</text>
</comment>
<comment type="subunit">
    <text evidence="1">Heterohexadecamer of 8 large chains and 8 small chains; disulfide-linked. The disulfide link is formed within the large subunit homodimers.</text>
</comment>
<comment type="subcellular location">
    <subcellularLocation>
        <location>Plastid</location>
        <location>Chloroplast</location>
    </subcellularLocation>
</comment>
<comment type="PTM">
    <text evidence="1">The disulfide bond which can form in the large chain dimeric partners within the hexadecamer appears to be associated with oxidative stress and protein turnover.</text>
</comment>
<comment type="miscellaneous">
    <text evidence="1">The basic functional RuBisCO is composed of a large chain homodimer in a 'head-to-tail' conformation. In form I RuBisCO this homodimer is arranged in a barrel-like tetramer with the small subunits forming a tetrameric 'cap' on each end of the 'barrel'.</text>
</comment>
<comment type="similarity">
    <text evidence="1">Belongs to the RuBisCO large chain family. Type I subfamily.</text>
</comment>
<keyword id="KW-0113">Calvin cycle</keyword>
<keyword id="KW-0120">Carbon dioxide fixation</keyword>
<keyword id="KW-0150">Chloroplast</keyword>
<keyword id="KW-1015">Disulfide bond</keyword>
<keyword id="KW-0456">Lyase</keyword>
<keyword id="KW-0460">Magnesium</keyword>
<keyword id="KW-0479">Metal-binding</keyword>
<keyword id="KW-0488">Methylation</keyword>
<keyword id="KW-0503">Monooxygenase</keyword>
<keyword id="KW-0560">Oxidoreductase</keyword>
<keyword id="KW-0601">Photorespiration</keyword>
<keyword id="KW-0602">Photosynthesis</keyword>
<keyword id="KW-0934">Plastid</keyword>
<sequence length="444" mass="49293">SVGFKAGVKDYRLTYYTPEYQTKDTDILAAFRVTPQPGVPPEEAGAAVAAESSTGTWTTVWTDGLTSLDRYKGRCYDIEPVPGEENQFIAYVAYPLDLFEEGSVTNLFTSIVGNVFGFKALRALRLEDLRIPPAYSKTFQGPPHGIQVERDKLNKYGRPLLGCTIKPKLGLSAKNYGRAVYECLRGGLDFTKDDENVNSQPFMRWRDRFLFCAEAIYKAQTETGEIKGHYLNATAGTCEEMMKRAVFARELGVPIVMHDYLTGGFTANTSLAHYCRDNGLLLHIHRAMHAVIDRQRNHGMHFRVLAKALRMSGGDHIHAGTVVGKLEGEREVTLGFVDLLRDDFIEKDRSRGIYFTQDWVSMPGVLPVASGDIHVWHMPALTEIFGDDSVLQFGGGTLGHPWGNAPGAVANRVALEACVQARNEGRDLAREGNEVIREASKWSP</sequence>
<evidence type="ECO:0000255" key="1">
    <source>
        <dbReference type="HAMAP-Rule" id="MF_01338"/>
    </source>
</evidence>
<geneLocation type="chloroplast"/>
<organism>
    <name type="scientific">Ginkgo biloba</name>
    <name type="common">Ginkgo</name>
    <name type="synonym">Maidenhair tree</name>
    <dbReference type="NCBI Taxonomy" id="3311"/>
    <lineage>
        <taxon>Eukaryota</taxon>
        <taxon>Viridiplantae</taxon>
        <taxon>Streptophyta</taxon>
        <taxon>Embryophyta</taxon>
        <taxon>Tracheophyta</taxon>
        <taxon>Spermatophyta</taxon>
        <taxon>Ginkgoidae</taxon>
        <taxon>Ginkgoales</taxon>
        <taxon>Ginkgoaceae</taxon>
        <taxon>Ginkgo</taxon>
    </lineage>
</organism>
<gene>
    <name evidence="1" type="primary">rbcL</name>
</gene>
<protein>
    <recommendedName>
        <fullName evidence="1">Ribulose bisphosphate carboxylase large chain</fullName>
        <shortName evidence="1">RuBisCO large subunit</shortName>
        <ecNumber evidence="1">4.1.1.39</ecNumber>
    </recommendedName>
</protein>
<proteinExistence type="inferred from homology"/>
<accession>P48704</accession>
<dbReference type="EC" id="4.1.1.39" evidence="1"/>
<dbReference type="EMBL" id="D10733">
    <property type="protein sequence ID" value="BAA01577.1"/>
    <property type="molecule type" value="Genomic_DNA"/>
</dbReference>
<dbReference type="SMR" id="P48704"/>
<dbReference type="GO" id="GO:0009507">
    <property type="term" value="C:chloroplast"/>
    <property type="evidence" value="ECO:0007669"/>
    <property type="project" value="UniProtKB-SubCell"/>
</dbReference>
<dbReference type="GO" id="GO:0000287">
    <property type="term" value="F:magnesium ion binding"/>
    <property type="evidence" value="ECO:0007669"/>
    <property type="project" value="InterPro"/>
</dbReference>
<dbReference type="GO" id="GO:0004497">
    <property type="term" value="F:monooxygenase activity"/>
    <property type="evidence" value="ECO:0007669"/>
    <property type="project" value="UniProtKB-KW"/>
</dbReference>
<dbReference type="GO" id="GO:0016984">
    <property type="term" value="F:ribulose-bisphosphate carboxylase activity"/>
    <property type="evidence" value="ECO:0007669"/>
    <property type="project" value="UniProtKB-EC"/>
</dbReference>
<dbReference type="GO" id="GO:0009853">
    <property type="term" value="P:photorespiration"/>
    <property type="evidence" value="ECO:0007669"/>
    <property type="project" value="UniProtKB-KW"/>
</dbReference>
<dbReference type="GO" id="GO:0019253">
    <property type="term" value="P:reductive pentose-phosphate cycle"/>
    <property type="evidence" value="ECO:0007669"/>
    <property type="project" value="UniProtKB-KW"/>
</dbReference>
<dbReference type="CDD" id="cd08212">
    <property type="entry name" value="RuBisCO_large_I"/>
    <property type="match status" value="1"/>
</dbReference>
<dbReference type="FunFam" id="3.20.20.110:FF:000001">
    <property type="entry name" value="Ribulose bisphosphate carboxylase large chain"/>
    <property type="match status" value="1"/>
</dbReference>
<dbReference type="FunFam" id="3.30.70.150:FF:000001">
    <property type="entry name" value="Ribulose bisphosphate carboxylase large chain"/>
    <property type="match status" value="1"/>
</dbReference>
<dbReference type="Gene3D" id="3.20.20.110">
    <property type="entry name" value="Ribulose bisphosphate carboxylase, large subunit, C-terminal domain"/>
    <property type="match status" value="1"/>
</dbReference>
<dbReference type="Gene3D" id="3.30.70.150">
    <property type="entry name" value="RuBisCO large subunit, N-terminal domain"/>
    <property type="match status" value="1"/>
</dbReference>
<dbReference type="HAMAP" id="MF_01338">
    <property type="entry name" value="RuBisCO_L_type1"/>
    <property type="match status" value="1"/>
</dbReference>
<dbReference type="InterPro" id="IPR033966">
    <property type="entry name" value="RuBisCO"/>
</dbReference>
<dbReference type="InterPro" id="IPR020878">
    <property type="entry name" value="RuBisCo_large_chain_AS"/>
</dbReference>
<dbReference type="InterPro" id="IPR000685">
    <property type="entry name" value="RuBisCO_lsu_C"/>
</dbReference>
<dbReference type="InterPro" id="IPR036376">
    <property type="entry name" value="RuBisCO_lsu_C_sf"/>
</dbReference>
<dbReference type="InterPro" id="IPR017443">
    <property type="entry name" value="RuBisCO_lsu_fd_N"/>
</dbReference>
<dbReference type="InterPro" id="IPR036422">
    <property type="entry name" value="RuBisCO_lsu_N_sf"/>
</dbReference>
<dbReference type="InterPro" id="IPR020888">
    <property type="entry name" value="RuBisCO_lsuI"/>
</dbReference>
<dbReference type="NCBIfam" id="NF003252">
    <property type="entry name" value="PRK04208.1"/>
    <property type="match status" value="1"/>
</dbReference>
<dbReference type="PANTHER" id="PTHR42704">
    <property type="entry name" value="RIBULOSE BISPHOSPHATE CARBOXYLASE"/>
    <property type="match status" value="1"/>
</dbReference>
<dbReference type="PANTHER" id="PTHR42704:SF15">
    <property type="entry name" value="RIBULOSE BISPHOSPHATE CARBOXYLASE LARGE CHAIN"/>
    <property type="match status" value="1"/>
</dbReference>
<dbReference type="Pfam" id="PF00016">
    <property type="entry name" value="RuBisCO_large"/>
    <property type="match status" value="1"/>
</dbReference>
<dbReference type="Pfam" id="PF02788">
    <property type="entry name" value="RuBisCO_large_N"/>
    <property type="match status" value="1"/>
</dbReference>
<dbReference type="SFLD" id="SFLDS00014">
    <property type="entry name" value="RuBisCO"/>
    <property type="match status" value="1"/>
</dbReference>
<dbReference type="SFLD" id="SFLDG00301">
    <property type="entry name" value="RuBisCO-like_proteins"/>
    <property type="match status" value="1"/>
</dbReference>
<dbReference type="SUPFAM" id="SSF51649">
    <property type="entry name" value="RuBisCo, C-terminal domain"/>
    <property type="match status" value="1"/>
</dbReference>
<dbReference type="SUPFAM" id="SSF54966">
    <property type="entry name" value="RuBisCO, large subunit, small (N-terminal) domain"/>
    <property type="match status" value="1"/>
</dbReference>
<dbReference type="PROSITE" id="PS00157">
    <property type="entry name" value="RUBISCO_LARGE"/>
    <property type="match status" value="1"/>
</dbReference>
<feature type="chain" id="PRO_0000062480" description="Ribulose bisphosphate carboxylase large chain">
    <location>
        <begin position="1" status="less than"/>
        <end position="444" status="greater than"/>
    </location>
</feature>
<feature type="active site" description="Proton acceptor" evidence="1">
    <location>
        <position position="166"/>
    </location>
</feature>
<feature type="active site" description="Proton acceptor" evidence="1">
    <location>
        <position position="285"/>
    </location>
</feature>
<feature type="binding site" description="in homodimeric partner" evidence="1">
    <location>
        <position position="114"/>
    </location>
    <ligand>
        <name>substrate</name>
    </ligand>
</feature>
<feature type="binding site" evidence="1">
    <location>
        <position position="164"/>
    </location>
    <ligand>
        <name>substrate</name>
    </ligand>
</feature>
<feature type="binding site" evidence="1">
    <location>
        <position position="168"/>
    </location>
    <ligand>
        <name>substrate</name>
    </ligand>
</feature>
<feature type="binding site" description="via carbamate group" evidence="1">
    <location>
        <position position="192"/>
    </location>
    <ligand>
        <name>Mg(2+)</name>
        <dbReference type="ChEBI" id="CHEBI:18420"/>
    </ligand>
</feature>
<feature type="binding site" evidence="1">
    <location>
        <position position="194"/>
    </location>
    <ligand>
        <name>Mg(2+)</name>
        <dbReference type="ChEBI" id="CHEBI:18420"/>
    </ligand>
</feature>
<feature type="binding site" evidence="1">
    <location>
        <position position="195"/>
    </location>
    <ligand>
        <name>Mg(2+)</name>
        <dbReference type="ChEBI" id="CHEBI:18420"/>
    </ligand>
</feature>
<feature type="binding site" evidence="1">
    <location>
        <position position="286"/>
    </location>
    <ligand>
        <name>substrate</name>
    </ligand>
</feature>
<feature type="binding site" evidence="1">
    <location>
        <position position="318"/>
    </location>
    <ligand>
        <name>substrate</name>
    </ligand>
</feature>
<feature type="binding site" evidence="1">
    <location>
        <position position="370"/>
    </location>
    <ligand>
        <name>substrate</name>
    </ligand>
</feature>
<feature type="site" description="Transition state stabilizer" evidence="1">
    <location>
        <position position="325"/>
    </location>
</feature>
<feature type="modified residue" description="N6,N6,N6-trimethyllysine" evidence="1">
    <location>
        <position position="5"/>
    </location>
</feature>
<feature type="modified residue" description="N6-carboxylysine" evidence="1">
    <location>
        <position position="192"/>
    </location>
</feature>
<feature type="disulfide bond" description="Interchain; in linked form" evidence="1">
    <location>
        <position position="238"/>
    </location>
</feature>
<feature type="non-terminal residue">
    <location>
        <position position="1"/>
    </location>
</feature>
<feature type="non-terminal residue">
    <location>
        <position position="444"/>
    </location>
</feature>
<name>RBL_GINBI</name>